<dbReference type="EMBL" id="DQ150588">
    <property type="protein sequence ID" value="AAZ78481.1"/>
    <property type="molecule type" value="mRNA"/>
</dbReference>
<dbReference type="PDB" id="3H6S">
    <property type="method" value="X-ray"/>
    <property type="resolution" value="2.22 A"/>
    <property type="chains" value="E/F/G/H=1-152"/>
</dbReference>
<dbReference type="PDBsum" id="3H6S"/>
<dbReference type="SMR" id="Q3Y9I6"/>
<dbReference type="MEROPS" id="I48.001"/>
<dbReference type="EvolutionaryTrace" id="Q3Y9I6"/>
<dbReference type="GO" id="GO:0004869">
    <property type="term" value="F:cysteine-type endopeptidase inhibitor activity"/>
    <property type="evidence" value="ECO:0007669"/>
    <property type="project" value="UniProtKB-KW"/>
</dbReference>
<dbReference type="Gene3D" id="2.80.10.50">
    <property type="match status" value="1"/>
</dbReference>
<dbReference type="InterPro" id="IPR019508">
    <property type="entry name" value="Prot_inh_I48_clitocypin"/>
</dbReference>
<dbReference type="Pfam" id="PF10467">
    <property type="entry name" value="Inhibitor_I48"/>
    <property type="match status" value="1"/>
</dbReference>
<accession>Q3Y9I6</accession>
<comment type="function">
    <text evidence="2">Binds and inhibits cysteine proteinases. Inhibits most strongly papain and cathepsin L, more weakly bromelain and cathepsin B while it is completely ineffective against cathepsin H.</text>
</comment>
<comment type="subunit">
    <text evidence="2">Homodimer.</text>
</comment>
<comment type="subcellular location">
    <text evidence="1">Not secreted.</text>
</comment>
<comment type="mass spectrometry" mass="16701.0" method="Electrospray" evidence="2"/>
<comment type="similarity">
    <text evidence="3">Belongs to the protease inhibitor I48 family.</text>
</comment>
<feature type="chain" id="PRO_0000397841" description="Clitocypin-5">
    <location>
        <begin position="1"/>
        <end position="152"/>
    </location>
</feature>
<feature type="strand" evidence="4">
    <location>
        <begin position="6"/>
        <end position="17"/>
    </location>
</feature>
<feature type="strand" evidence="4">
    <location>
        <begin position="26"/>
        <end position="29"/>
    </location>
</feature>
<feature type="strand" evidence="4">
    <location>
        <begin position="38"/>
        <end position="43"/>
    </location>
</feature>
<feature type="turn" evidence="4">
    <location>
        <begin position="44"/>
        <end position="46"/>
    </location>
</feature>
<feature type="helix" evidence="4">
    <location>
        <begin position="47"/>
        <end position="49"/>
    </location>
</feature>
<feature type="strand" evidence="4">
    <location>
        <begin position="52"/>
        <end position="56"/>
    </location>
</feature>
<feature type="strand" evidence="4">
    <location>
        <begin position="62"/>
        <end position="66"/>
    </location>
</feature>
<feature type="strand" evidence="4">
    <location>
        <begin position="75"/>
        <end position="78"/>
    </location>
</feature>
<feature type="strand" evidence="4">
    <location>
        <begin position="89"/>
        <end position="92"/>
    </location>
</feature>
<feature type="strand" evidence="4">
    <location>
        <begin position="96"/>
        <end position="100"/>
    </location>
</feature>
<feature type="strand" evidence="4">
    <location>
        <begin position="105"/>
        <end position="111"/>
    </location>
</feature>
<feature type="helix" evidence="4">
    <location>
        <begin position="115"/>
        <end position="117"/>
    </location>
</feature>
<feature type="strand" evidence="4">
    <location>
        <begin position="119"/>
        <end position="126"/>
    </location>
</feature>
<feature type="strand" evidence="4">
    <location>
        <begin position="129"/>
        <end position="136"/>
    </location>
</feature>
<feature type="strand" evidence="4">
    <location>
        <begin position="145"/>
        <end position="151"/>
    </location>
</feature>
<gene>
    <name type="primary">clt5</name>
</gene>
<evidence type="ECO:0000250" key="1">
    <source>
        <dbReference type="UniProtKB" id="Q9P4A2"/>
    </source>
</evidence>
<evidence type="ECO:0000269" key="2">
    <source>
    </source>
</evidence>
<evidence type="ECO:0000305" key="3"/>
<evidence type="ECO:0007829" key="4">
    <source>
        <dbReference type="PDB" id="3H6S"/>
    </source>
</evidence>
<keyword id="KW-0002">3D-structure</keyword>
<keyword id="KW-0903">Direct protein sequencing</keyword>
<keyword id="KW-0646">Protease inhibitor</keyword>
<keyword id="KW-0789">Thiol protease inhibitor</keyword>
<sequence length="152" mass="16833">MASLEDGTYRLRAVTTSNPDPGVGGEYATVEGARQPVKAEPSTPPFFERQIWQVTRNSDGQSTIKYQGLNAPFEYGFSYDQLEQNAPVIAGDPKEYILQLVPSTTDVYIIRAPIQRVGVDVEVGVQGNNLVYKFFPVDGSGGDRPAWRFTRE</sequence>
<organism>
    <name type="scientific">Clitocybe nebularis</name>
    <name type="common">Clouded agaric</name>
    <name type="synonym">Lepista nebularis</name>
    <dbReference type="NCBI Taxonomy" id="117024"/>
    <lineage>
        <taxon>Eukaryota</taxon>
        <taxon>Fungi</taxon>
        <taxon>Dikarya</taxon>
        <taxon>Basidiomycota</taxon>
        <taxon>Agaricomycotina</taxon>
        <taxon>Agaricomycetes</taxon>
        <taxon>Agaricomycetidae</taxon>
        <taxon>Agaricales</taxon>
        <taxon>Tricholomatineae</taxon>
        <taxon>Clitocybaceae</taxon>
        <taxon>Clitocybe</taxon>
    </lineage>
</organism>
<name>CLIT5_CLINE</name>
<protein>
    <recommendedName>
        <fullName>Clitocypin-5</fullName>
    </recommendedName>
    <alternativeName>
        <fullName>Cysteine protease inhibitor clt5</fullName>
    </alternativeName>
</protein>
<proteinExistence type="evidence at protein level"/>
<reference key="1">
    <citation type="journal article" date="2006" name="Biol. Chem.">
        <title>Heterogeneity in the cysteine protease inhibitor clitocypin gene family.</title>
        <authorList>
            <person name="Sabotic J."/>
            <person name="Gaser D."/>
            <person name="Rogelj B."/>
            <person name="Gruden K."/>
            <person name="Strukelj B."/>
            <person name="Brzin J."/>
        </authorList>
    </citation>
    <scope>NUCLEOTIDE SEQUENCE [MRNA]</scope>
    <source>
        <strain>Kras2004</strain>
    </source>
</reference>
<reference key="2">
    <citation type="journal article" date="2007" name="Protein Expr. Purif.">
        <title>Comparison of natural and recombinant clitocypins, the fungal cysteine protease inhibitors.</title>
        <authorList>
            <person name="Sabotic J."/>
            <person name="Galesa K."/>
            <person name="Popovic T."/>
            <person name="Leonardi A."/>
            <person name="Brzin J."/>
        </authorList>
    </citation>
    <scope>PROTEIN SEQUENCE OF 2-9</scope>
    <scope>FUNCTION</scope>
    <scope>SUBUNIT</scope>
    <scope>MASS SPECTROMETRY</scope>
</reference>
<reference key="3">
    <citation type="journal article" date="2010" name="J. Biol. Chem.">
        <title>Versatile loops in mycocypins inhibit three protease families.</title>
        <authorList>
            <person name="Renko M."/>
            <person name="Sabotic J."/>
            <person name="Mihelic M."/>
            <person name="Brzin J."/>
            <person name="Kos J."/>
            <person name="Turk D."/>
        </authorList>
    </citation>
    <scope>X-RAY CRYSTALLOGRAPHY (2.22 ANGSTROMS) OF COMPLEX WITH CATHEPSIN L2</scope>
</reference>